<gene>
    <name evidence="7" type="primary">DNAAF6</name>
    <name evidence="7" type="synonym">CXorf41</name>
    <name evidence="7" type="synonym">PIH1D3</name>
</gene>
<dbReference type="EMBL" id="AL136112">
    <property type="status" value="NOT_ANNOTATED_CDS"/>
    <property type="molecule type" value="Genomic_DNA"/>
</dbReference>
<dbReference type="EMBL" id="CH471120">
    <property type="protein sequence ID" value="EAX02716.1"/>
    <property type="molecule type" value="Genomic_DNA"/>
</dbReference>
<dbReference type="EMBL" id="CH471120">
    <property type="protein sequence ID" value="EAX02717.1"/>
    <property type="molecule type" value="Genomic_DNA"/>
</dbReference>
<dbReference type="EMBL" id="BC033510">
    <property type="protein sequence ID" value="AAH33510.1"/>
    <property type="molecule type" value="mRNA"/>
</dbReference>
<dbReference type="EMBL" id="AY211928">
    <property type="protein sequence ID" value="AAO65181.1"/>
    <property type="status" value="ALT_FRAME"/>
    <property type="molecule type" value="mRNA"/>
</dbReference>
<dbReference type="CCDS" id="CCDS14528.1"/>
<dbReference type="RefSeq" id="NP_001162625.1">
    <property type="nucleotide sequence ID" value="NM_001169154.2"/>
</dbReference>
<dbReference type="RefSeq" id="NP_775765.1">
    <property type="nucleotide sequence ID" value="NM_173494.2"/>
</dbReference>
<dbReference type="RefSeq" id="XP_011529157.1">
    <property type="nucleotide sequence ID" value="XM_011530855.2"/>
</dbReference>
<dbReference type="SMR" id="Q9NQM4"/>
<dbReference type="BioGRID" id="126551">
    <property type="interactions" value="17"/>
</dbReference>
<dbReference type="FunCoup" id="Q9NQM4">
    <property type="interactions" value="270"/>
</dbReference>
<dbReference type="IntAct" id="Q9NQM4">
    <property type="interactions" value="15"/>
</dbReference>
<dbReference type="STRING" id="9606.ENSP00000441930"/>
<dbReference type="iPTMnet" id="Q9NQM4"/>
<dbReference type="PhosphoSitePlus" id="Q9NQM4"/>
<dbReference type="BioMuta" id="PIH1D3"/>
<dbReference type="DMDM" id="71153251"/>
<dbReference type="MassIVE" id="Q9NQM4"/>
<dbReference type="PaxDb" id="9606-ENSP00000441930"/>
<dbReference type="PeptideAtlas" id="Q9NQM4"/>
<dbReference type="ProteomicsDB" id="82164"/>
<dbReference type="Antibodypedia" id="63940">
    <property type="antibodies" value="47 antibodies from 14 providers"/>
</dbReference>
<dbReference type="DNASU" id="139212"/>
<dbReference type="Ensembl" id="ENST00000336387.4">
    <property type="protein sequence ID" value="ENSP00000337757.4"/>
    <property type="gene ID" value="ENSG00000080572.14"/>
</dbReference>
<dbReference type="Ensembl" id="ENST00000372453.8">
    <property type="protein sequence ID" value="ENSP00000361531.3"/>
    <property type="gene ID" value="ENSG00000080572.14"/>
</dbReference>
<dbReference type="Ensembl" id="ENST00000535523.6">
    <property type="protein sequence ID" value="ENSP00000441930.1"/>
    <property type="gene ID" value="ENSG00000080572.14"/>
</dbReference>
<dbReference type="GeneID" id="139212"/>
<dbReference type="KEGG" id="hsa:139212"/>
<dbReference type="MANE-Select" id="ENST00000372453.8">
    <property type="protein sequence ID" value="ENSP00000361531.3"/>
    <property type="RefSeq nucleotide sequence ID" value="NM_173494.2"/>
    <property type="RefSeq protein sequence ID" value="NP_775765.1"/>
</dbReference>
<dbReference type="UCSC" id="uc004enc.3">
    <property type="organism name" value="human"/>
</dbReference>
<dbReference type="AGR" id="HGNC:28570"/>
<dbReference type="CTD" id="139212"/>
<dbReference type="DisGeNET" id="139212"/>
<dbReference type="GeneCards" id="DNAAF6"/>
<dbReference type="HGNC" id="HGNC:28570">
    <property type="gene designation" value="DNAAF6"/>
</dbReference>
<dbReference type="HPA" id="ENSG00000080572">
    <property type="expression patterns" value="Group enriched (choroid plexus, fallopian tube, testis)"/>
</dbReference>
<dbReference type="MalaCards" id="DNAAF6"/>
<dbReference type="MIM" id="300933">
    <property type="type" value="gene"/>
</dbReference>
<dbReference type="MIM" id="300991">
    <property type="type" value="phenotype"/>
</dbReference>
<dbReference type="neXtProt" id="NX_Q9NQM4"/>
<dbReference type="OpenTargets" id="ENSG00000080572"/>
<dbReference type="Orphanet" id="244">
    <property type="disease" value="Primary ciliary dyskinesia"/>
</dbReference>
<dbReference type="VEuPathDB" id="HostDB:ENSG00000080572"/>
<dbReference type="eggNOG" id="ENOG502RZWX">
    <property type="taxonomic scope" value="Eukaryota"/>
</dbReference>
<dbReference type="GeneTree" id="ENSGT00390000015219"/>
<dbReference type="HOGENOM" id="CLU_106090_1_0_1"/>
<dbReference type="InParanoid" id="Q9NQM4"/>
<dbReference type="OMA" id="ESMVVHK"/>
<dbReference type="OrthoDB" id="25887at2759"/>
<dbReference type="PAN-GO" id="Q9NQM4">
    <property type="GO annotations" value="4 GO annotations based on evolutionary models"/>
</dbReference>
<dbReference type="PhylomeDB" id="Q9NQM4"/>
<dbReference type="TreeFam" id="TF325677"/>
<dbReference type="PathwayCommons" id="Q9NQM4"/>
<dbReference type="SignaLink" id="Q9NQM4"/>
<dbReference type="BioGRID-ORCS" id="139212">
    <property type="hits" value="6 hits in 757 CRISPR screens"/>
</dbReference>
<dbReference type="CD-CODE" id="B5B9A610">
    <property type="entry name" value="PML body"/>
</dbReference>
<dbReference type="GenomeRNAi" id="139212"/>
<dbReference type="Pharos" id="Q9NQM4">
    <property type="development level" value="Tbio"/>
</dbReference>
<dbReference type="PRO" id="PR:Q9NQM4"/>
<dbReference type="Proteomes" id="UP000005640">
    <property type="component" value="Chromosome X"/>
</dbReference>
<dbReference type="RNAct" id="Q9NQM4">
    <property type="molecule type" value="protein"/>
</dbReference>
<dbReference type="Bgee" id="ENSG00000080572">
    <property type="expression patterns" value="Expressed in bronchial epithelial cell and 58 other cell types or tissues"/>
</dbReference>
<dbReference type="ExpressionAtlas" id="Q9NQM4">
    <property type="expression patterns" value="baseline and differential"/>
</dbReference>
<dbReference type="GO" id="GO:0005737">
    <property type="term" value="C:cytoplasm"/>
    <property type="evidence" value="ECO:0000314"/>
    <property type="project" value="UniProtKB"/>
</dbReference>
<dbReference type="GO" id="GO:0005802">
    <property type="term" value="C:trans-Golgi network"/>
    <property type="evidence" value="ECO:0000314"/>
    <property type="project" value="UniProtKB"/>
</dbReference>
<dbReference type="GO" id="GO:0045505">
    <property type="term" value="F:dynein intermediate chain binding"/>
    <property type="evidence" value="ECO:0000315"/>
    <property type="project" value="UniProtKB"/>
</dbReference>
<dbReference type="GO" id="GO:0051087">
    <property type="term" value="F:protein-folding chaperone binding"/>
    <property type="evidence" value="ECO:0000250"/>
    <property type="project" value="UniProtKB"/>
</dbReference>
<dbReference type="GO" id="GO:0070286">
    <property type="term" value="P:axonemal dynein complex assembly"/>
    <property type="evidence" value="ECO:0000315"/>
    <property type="project" value="UniProtKB"/>
</dbReference>
<dbReference type="GO" id="GO:0003341">
    <property type="term" value="P:cilium movement"/>
    <property type="evidence" value="ECO:0000315"/>
    <property type="project" value="UniProtKB"/>
</dbReference>
<dbReference type="GO" id="GO:0030317">
    <property type="term" value="P:flagellated sperm motility"/>
    <property type="evidence" value="ECO:0000315"/>
    <property type="project" value="UniProtKB"/>
</dbReference>
<dbReference type="GO" id="GO:0036159">
    <property type="term" value="P:inner dynein arm assembly"/>
    <property type="evidence" value="ECO:0000315"/>
    <property type="project" value="UniProtKB"/>
</dbReference>
<dbReference type="GO" id="GO:0036158">
    <property type="term" value="P:outer dynein arm assembly"/>
    <property type="evidence" value="ECO:0000315"/>
    <property type="project" value="UniProtKB"/>
</dbReference>
<dbReference type="InterPro" id="IPR026697">
    <property type="entry name" value="DNAAF6"/>
</dbReference>
<dbReference type="InterPro" id="IPR041442">
    <property type="entry name" value="PIH1D1/2/3_CS-like"/>
</dbReference>
<dbReference type="PANTHER" id="PTHR21083:SF0">
    <property type="entry name" value="DYNEIN AXONEMAL ASSEMBLY FACTOR 6"/>
    <property type="match status" value="1"/>
</dbReference>
<dbReference type="PANTHER" id="PTHR21083">
    <property type="entry name" value="TWISTER"/>
    <property type="match status" value="1"/>
</dbReference>
<dbReference type="Pfam" id="PF18201">
    <property type="entry name" value="PIH1_CS"/>
    <property type="match status" value="1"/>
</dbReference>
<feature type="chain" id="PRO_0000079736" description="Dynein axonemal assembly factor 6">
    <location>
        <begin position="1"/>
        <end position="214"/>
    </location>
</feature>
<feature type="region of interest" description="Disordered" evidence="2">
    <location>
        <begin position="1"/>
        <end position="22"/>
    </location>
</feature>
<feature type="region of interest" description="Disordered" evidence="2">
    <location>
        <begin position="34"/>
        <end position="68"/>
    </location>
</feature>
<feature type="sequence variant" id="VAR_083176" description="In CILD36; strongly decreased expression at protein level; almost complete loss of outer dynein arms and less loss of inner dynein arms in motor cilia; decreased cilia movement; no effect on trans-Golgi network location; abolishes interaction with DNAI2." evidence="5">
    <location>
        <begin position="43"/>
        <end position="214"/>
    </location>
</feature>
<feature type="sequence variant" id="VAR_083177" description="In CILD36; almost complete loss of inner dynein arms and less loss of outer dynein arms in motor cilia; immotile cilia; abolishes interaction with DNAI2." evidence="5">
    <location>
        <begin position="89"/>
        <end position="214"/>
    </location>
</feature>
<feature type="sequence variant" id="VAR_078066" description="In CILD36; defective preassembly of outer and inner dynein arms." evidence="4">
    <location>
        <begin position="119"/>
        <end position="214"/>
    </location>
</feature>
<feature type="sequence variant" id="VAR_083178" description="In CILD36; no effect on expression at protein level; almost complete loss of outer dynein arms and inner dynein arms in motor cilia; immotile cilia; abolishes interaction with DNAI2." evidence="5">
    <original>D</original>
    <variation>Y</variation>
    <location>
        <position position="133"/>
    </location>
</feature>
<feature type="sequence variant" id="VAR_083179" description="In CILD36; almost complete loss of outer dynein arms and inner dynein arms in motor cilia; immotile cilia." evidence="5">
    <location>
        <begin position="171"/>
        <end position="214"/>
    </location>
</feature>
<accession>Q9NQM4</accession>
<accession>D3DUX5</accession>
<accession>Q86WE1</accession>
<organism>
    <name type="scientific">Homo sapiens</name>
    <name type="common">Human</name>
    <dbReference type="NCBI Taxonomy" id="9606"/>
    <lineage>
        <taxon>Eukaryota</taxon>
        <taxon>Metazoa</taxon>
        <taxon>Chordata</taxon>
        <taxon>Craniata</taxon>
        <taxon>Vertebrata</taxon>
        <taxon>Euteleostomi</taxon>
        <taxon>Mammalia</taxon>
        <taxon>Eutheria</taxon>
        <taxon>Euarchontoglires</taxon>
        <taxon>Primates</taxon>
        <taxon>Haplorrhini</taxon>
        <taxon>Catarrhini</taxon>
        <taxon>Hominidae</taxon>
        <taxon>Homo</taxon>
    </lineage>
</organism>
<evidence type="ECO:0000250" key="1">
    <source>
        <dbReference type="UniProtKB" id="Q3KNI6"/>
    </source>
</evidence>
<evidence type="ECO:0000256" key="2">
    <source>
        <dbReference type="SAM" id="MobiDB-lite"/>
    </source>
</evidence>
<evidence type="ECO:0000269" key="3">
    <source>
    </source>
</evidence>
<evidence type="ECO:0000269" key="4">
    <source>
    </source>
</evidence>
<evidence type="ECO:0000269" key="5">
    <source>
    </source>
</evidence>
<evidence type="ECO:0000305" key="6"/>
<evidence type="ECO:0000312" key="7">
    <source>
        <dbReference type="HGNC" id="HGNC:28570"/>
    </source>
</evidence>
<protein>
    <recommendedName>
        <fullName evidence="7">Dynein axonemal assembly factor 6</fullName>
    </recommendedName>
    <alternativeName>
        <fullName evidence="7">PIH1 domain-containing protein 3</fullName>
    </alternativeName>
    <alternativeName>
        <fullName>Sarcoma antigen NY-SAR-97</fullName>
    </alternativeName>
</protein>
<sequence>MESENMDSENMKTENMESQNVDFESVSSVTALEALSKLLNPEEEDDSDYGQTNGLSTIGAMGPGNIGPPQIEELKVIPETSEENNEDIWNSEEIPEGAEYDDMWDVREIPEYEIIFRQQVGTEDIFLGLSKKDSSTGCCSELVAKIKLPNTNPSDIQIDIQETILDLRTPQKKLLITLPELVECTSAKAFYIPETETLEITMTMKRELDIANFF</sequence>
<proteinExistence type="evidence at protein level"/>
<keyword id="KW-1186">Ciliopathy</keyword>
<keyword id="KW-0963">Cytoplasm</keyword>
<keyword id="KW-0225">Disease variant</keyword>
<keyword id="KW-0333">Golgi apparatus</keyword>
<keyword id="KW-1012">Kartagener syndrome</keyword>
<keyword id="KW-0990">Primary ciliary dyskinesia</keyword>
<keyword id="KW-1267">Proteomics identification</keyword>
<keyword id="KW-1185">Reference proteome</keyword>
<comment type="function">
    <text evidence="4 5">Plays a role in cytoplasmic pre-assembly of axonemal dynein.</text>
</comment>
<comment type="subunit">
    <text evidence="1 4 5">Interacts with HSPA1A/B and HSP90AA1 (By similarity). Interacts with DNAAF2 and DNAAF4 (PubMed:28041644). Interacts wuth DNAI2 (PubMed:28176794).</text>
</comment>
<comment type="interaction">
    <interactant intactId="EBI-10239299">
        <id>Q9NQM4</id>
    </interactant>
    <interactant intactId="EBI-11957452">
        <id>Q4LE39-3</id>
        <label>ARID4B</label>
    </interactant>
    <organismsDiffer>false</organismsDiffer>
    <experiments>3</experiments>
</comment>
<comment type="interaction">
    <interactant intactId="EBI-10239299">
        <id>Q9NQM4</id>
    </interactant>
    <interactant intactId="EBI-10239305">
        <id>Q2M1V9</id>
        <label>BTAF1</label>
    </interactant>
    <organismsDiffer>false</organismsDiffer>
    <experiments>3</experiments>
</comment>
<comment type="interaction">
    <interactant intactId="EBI-10239299">
        <id>Q9NQM4</id>
    </interactant>
    <interactant intactId="EBI-356265">
        <id>Q8IX12</id>
        <label>CCAR1</label>
    </interactant>
    <organismsDiffer>false</organismsDiffer>
    <experiments>3</experiments>
</comment>
<comment type="interaction">
    <interactant intactId="EBI-10239299">
        <id>Q9NQM4</id>
    </interactant>
    <interactant intactId="EBI-3919850">
        <id>Q8IVW4</id>
        <label>CDKL3</label>
    </interactant>
    <organismsDiffer>false</organismsDiffer>
    <experiments>3</experiments>
</comment>
<comment type="interaction">
    <interactant intactId="EBI-10239299">
        <id>Q9NQM4</id>
    </interactant>
    <interactant intactId="EBI-7960826">
        <id>Q8NHY3</id>
        <label>GAS2L2</label>
    </interactant>
    <organismsDiffer>false</organismsDiffer>
    <experiments>4</experiments>
</comment>
<comment type="interaction">
    <interactant intactId="EBI-10239299">
        <id>Q9NQM4</id>
    </interactant>
    <interactant intactId="EBI-399080">
        <id>Q92993</id>
        <label>KAT5</label>
    </interactant>
    <organismsDiffer>false</organismsDiffer>
    <experiments>6</experiments>
</comment>
<comment type="interaction">
    <interactant intactId="EBI-10239299">
        <id>Q9NQM4</id>
    </interactant>
    <interactant intactId="EBI-1759129">
        <id>Q9H1H9</id>
        <label>KIF13A</label>
    </interactant>
    <organismsDiffer>false</organismsDiffer>
    <experiments>3</experiments>
</comment>
<comment type="interaction">
    <interactant intactId="EBI-10239299">
        <id>Q9NQM4</id>
    </interactant>
    <interactant intactId="EBI-2828248">
        <id>Q99571</id>
        <label>P2RX4</label>
    </interactant>
    <organismsDiffer>false</organismsDiffer>
    <experiments>3</experiments>
</comment>
<comment type="interaction">
    <interactant intactId="EBI-10239299">
        <id>Q9NQM4</id>
    </interactant>
    <interactant intactId="EBI-11953174">
        <id>Q7Z2X4-3</id>
        <label>PID1</label>
    </interactant>
    <organismsDiffer>false</organismsDiffer>
    <experiments>3</experiments>
</comment>
<comment type="interaction">
    <interactant intactId="EBI-10239299">
        <id>Q9NQM4</id>
    </interactant>
    <interactant intactId="EBI-713000">
        <id>Q9Y2S7</id>
        <label>POLDIP2</label>
    </interactant>
    <organismsDiffer>false</organismsDiffer>
    <experiments>3</experiments>
</comment>
<comment type="interaction">
    <interactant intactId="EBI-10239299">
        <id>Q9NQM4</id>
    </interactant>
    <interactant intactId="EBI-1383852">
        <id>P54646</id>
        <label>PRKAA2</label>
    </interactant>
    <organismsDiffer>false</organismsDiffer>
    <experiments>3</experiments>
</comment>
<comment type="interaction">
    <interactant intactId="EBI-10239299">
        <id>Q9NQM4</id>
    </interactant>
    <interactant intactId="EBI-2798044">
        <id>Q2TAL8</id>
        <label>QRICH1</label>
    </interactant>
    <organismsDiffer>false</organismsDiffer>
    <experiments>3</experiments>
</comment>
<comment type="interaction">
    <interactant intactId="EBI-10239299">
        <id>Q9NQM4</id>
    </interactant>
    <interactant intactId="EBI-12235180">
        <id>Q9H2S5</id>
        <label>RNF39</label>
    </interactant>
    <organismsDiffer>false</organismsDiffer>
    <experiments>3</experiments>
</comment>
<comment type="interaction">
    <interactant intactId="EBI-10239299">
        <id>Q9NQM4</id>
    </interactant>
    <interactant intactId="EBI-372432">
        <id>Q8WW01</id>
        <label>TSEN15</label>
    </interactant>
    <organismsDiffer>false</organismsDiffer>
    <experiments>3</experiments>
</comment>
<comment type="interaction">
    <interactant intactId="EBI-10239299">
        <id>Q9NQM4</id>
    </interactant>
    <interactant intactId="EBI-12111538">
        <id>Q8IY57-5</id>
        <label>YAF2</label>
    </interactant>
    <organismsDiffer>false</organismsDiffer>
    <experiments>3</experiments>
</comment>
<comment type="subcellular location">
    <subcellularLocation>
        <location evidence="5">Cytoplasm</location>
    </subcellularLocation>
    <subcellularLocation>
        <location evidence="5">Golgi apparatus</location>
        <location evidence="5">trans-Golgi network</location>
    </subcellularLocation>
    <text evidence="1">Localized to the cytoplasm of spermatogenic cells.</text>
</comment>
<comment type="tissue specificity">
    <text evidence="3 5">Expressed in testis, small intestine, prostate, adrenal gland, spleen, lung, bladder, breast and ovary. Expressed in ciliated epithelial cells (PubMed:28176794).</text>
</comment>
<comment type="disease" evidence="4 5">
    <disease id="DI-04940">
        <name>Ciliary dyskinesia, primary, 36, X-linked</name>
        <acronym>CILD36</acronym>
        <description>A form of primary ciliary dyskinesia, a disorder characterized by abnormalities of motile cilia. Respiratory infections leading to chronic inflammation and bronchiectasis are recurrent, due to defects in the respiratory cilia. Some patients exhibit randomization of left-right body asymmetry and situs inversus. Primary ciliary dyskinesia associated with situs inversus is referred to as Kartagener syndrome. CILD36 inheritance is X-linked recessive. About half of CILD36 patients have laterality defects due to ciliary dysfunction at the embryonic node.</description>
        <dbReference type="MIM" id="300991"/>
    </disease>
    <text>The disease is caused by variants affecting the gene represented in this entry.</text>
</comment>
<comment type="similarity">
    <text evidence="6">Belongs to the PIH1 family.</text>
</comment>
<comment type="sequence caution" evidence="6">
    <conflict type="frameshift">
        <sequence resource="EMBL-CDS" id="AAO65181"/>
    </conflict>
</comment>
<name>DAAF6_HUMAN</name>
<reference key="1">
    <citation type="journal article" date="2005" name="Nature">
        <title>The DNA sequence of the human X chromosome.</title>
        <authorList>
            <person name="Ross M.T."/>
            <person name="Grafham D.V."/>
            <person name="Coffey A.J."/>
            <person name="Scherer S."/>
            <person name="McLay K."/>
            <person name="Muzny D."/>
            <person name="Platzer M."/>
            <person name="Howell G.R."/>
            <person name="Burrows C."/>
            <person name="Bird C.P."/>
            <person name="Frankish A."/>
            <person name="Lovell F.L."/>
            <person name="Howe K.L."/>
            <person name="Ashurst J.L."/>
            <person name="Fulton R.S."/>
            <person name="Sudbrak R."/>
            <person name="Wen G."/>
            <person name="Jones M.C."/>
            <person name="Hurles M.E."/>
            <person name="Andrews T.D."/>
            <person name="Scott C.E."/>
            <person name="Searle S."/>
            <person name="Ramser J."/>
            <person name="Whittaker A."/>
            <person name="Deadman R."/>
            <person name="Carter N.P."/>
            <person name="Hunt S.E."/>
            <person name="Chen R."/>
            <person name="Cree A."/>
            <person name="Gunaratne P."/>
            <person name="Havlak P."/>
            <person name="Hodgson A."/>
            <person name="Metzker M.L."/>
            <person name="Richards S."/>
            <person name="Scott G."/>
            <person name="Steffen D."/>
            <person name="Sodergren E."/>
            <person name="Wheeler D.A."/>
            <person name="Worley K.C."/>
            <person name="Ainscough R."/>
            <person name="Ambrose K.D."/>
            <person name="Ansari-Lari M.A."/>
            <person name="Aradhya S."/>
            <person name="Ashwell R.I."/>
            <person name="Babbage A.K."/>
            <person name="Bagguley C.L."/>
            <person name="Ballabio A."/>
            <person name="Banerjee R."/>
            <person name="Barker G.E."/>
            <person name="Barlow K.F."/>
            <person name="Barrett I.P."/>
            <person name="Bates K.N."/>
            <person name="Beare D.M."/>
            <person name="Beasley H."/>
            <person name="Beasley O."/>
            <person name="Beck A."/>
            <person name="Bethel G."/>
            <person name="Blechschmidt K."/>
            <person name="Brady N."/>
            <person name="Bray-Allen S."/>
            <person name="Bridgeman A.M."/>
            <person name="Brown A.J."/>
            <person name="Brown M.J."/>
            <person name="Bonnin D."/>
            <person name="Bruford E.A."/>
            <person name="Buhay C."/>
            <person name="Burch P."/>
            <person name="Burford D."/>
            <person name="Burgess J."/>
            <person name="Burrill W."/>
            <person name="Burton J."/>
            <person name="Bye J.M."/>
            <person name="Carder C."/>
            <person name="Carrel L."/>
            <person name="Chako J."/>
            <person name="Chapman J.C."/>
            <person name="Chavez D."/>
            <person name="Chen E."/>
            <person name="Chen G."/>
            <person name="Chen Y."/>
            <person name="Chen Z."/>
            <person name="Chinault C."/>
            <person name="Ciccodicola A."/>
            <person name="Clark S.Y."/>
            <person name="Clarke G."/>
            <person name="Clee C.M."/>
            <person name="Clegg S."/>
            <person name="Clerc-Blankenburg K."/>
            <person name="Clifford K."/>
            <person name="Cobley V."/>
            <person name="Cole C.G."/>
            <person name="Conquer J.S."/>
            <person name="Corby N."/>
            <person name="Connor R.E."/>
            <person name="David R."/>
            <person name="Davies J."/>
            <person name="Davis C."/>
            <person name="Davis J."/>
            <person name="Delgado O."/>
            <person name="Deshazo D."/>
            <person name="Dhami P."/>
            <person name="Ding Y."/>
            <person name="Dinh H."/>
            <person name="Dodsworth S."/>
            <person name="Draper H."/>
            <person name="Dugan-Rocha S."/>
            <person name="Dunham A."/>
            <person name="Dunn M."/>
            <person name="Durbin K.J."/>
            <person name="Dutta I."/>
            <person name="Eades T."/>
            <person name="Ellwood M."/>
            <person name="Emery-Cohen A."/>
            <person name="Errington H."/>
            <person name="Evans K.L."/>
            <person name="Faulkner L."/>
            <person name="Francis F."/>
            <person name="Frankland J."/>
            <person name="Fraser A.E."/>
            <person name="Galgoczy P."/>
            <person name="Gilbert J."/>
            <person name="Gill R."/>
            <person name="Gloeckner G."/>
            <person name="Gregory S.G."/>
            <person name="Gribble S."/>
            <person name="Griffiths C."/>
            <person name="Grocock R."/>
            <person name="Gu Y."/>
            <person name="Gwilliam R."/>
            <person name="Hamilton C."/>
            <person name="Hart E.A."/>
            <person name="Hawes A."/>
            <person name="Heath P.D."/>
            <person name="Heitmann K."/>
            <person name="Hennig S."/>
            <person name="Hernandez J."/>
            <person name="Hinzmann B."/>
            <person name="Ho S."/>
            <person name="Hoffs M."/>
            <person name="Howden P.J."/>
            <person name="Huckle E.J."/>
            <person name="Hume J."/>
            <person name="Hunt P.J."/>
            <person name="Hunt A.R."/>
            <person name="Isherwood J."/>
            <person name="Jacob L."/>
            <person name="Johnson D."/>
            <person name="Jones S."/>
            <person name="de Jong P.J."/>
            <person name="Joseph S.S."/>
            <person name="Keenan S."/>
            <person name="Kelly S."/>
            <person name="Kershaw J.K."/>
            <person name="Khan Z."/>
            <person name="Kioschis P."/>
            <person name="Klages S."/>
            <person name="Knights A.J."/>
            <person name="Kosiura A."/>
            <person name="Kovar-Smith C."/>
            <person name="Laird G.K."/>
            <person name="Langford C."/>
            <person name="Lawlor S."/>
            <person name="Leversha M."/>
            <person name="Lewis L."/>
            <person name="Liu W."/>
            <person name="Lloyd C."/>
            <person name="Lloyd D.M."/>
            <person name="Loulseged H."/>
            <person name="Loveland J.E."/>
            <person name="Lovell J.D."/>
            <person name="Lozado R."/>
            <person name="Lu J."/>
            <person name="Lyne R."/>
            <person name="Ma J."/>
            <person name="Maheshwari M."/>
            <person name="Matthews L.H."/>
            <person name="McDowall J."/>
            <person name="McLaren S."/>
            <person name="McMurray A."/>
            <person name="Meidl P."/>
            <person name="Meitinger T."/>
            <person name="Milne S."/>
            <person name="Miner G."/>
            <person name="Mistry S.L."/>
            <person name="Morgan M."/>
            <person name="Morris S."/>
            <person name="Mueller I."/>
            <person name="Mullikin J.C."/>
            <person name="Nguyen N."/>
            <person name="Nordsiek G."/>
            <person name="Nyakatura G."/>
            <person name="O'dell C.N."/>
            <person name="Okwuonu G."/>
            <person name="Palmer S."/>
            <person name="Pandian R."/>
            <person name="Parker D."/>
            <person name="Parrish J."/>
            <person name="Pasternak S."/>
            <person name="Patel D."/>
            <person name="Pearce A.V."/>
            <person name="Pearson D.M."/>
            <person name="Pelan S.E."/>
            <person name="Perez L."/>
            <person name="Porter K.M."/>
            <person name="Ramsey Y."/>
            <person name="Reichwald K."/>
            <person name="Rhodes S."/>
            <person name="Ridler K.A."/>
            <person name="Schlessinger D."/>
            <person name="Schueler M.G."/>
            <person name="Sehra H.K."/>
            <person name="Shaw-Smith C."/>
            <person name="Shen H."/>
            <person name="Sheridan E.M."/>
            <person name="Shownkeen R."/>
            <person name="Skuce C.D."/>
            <person name="Smith M.L."/>
            <person name="Sotheran E.C."/>
            <person name="Steingruber H.E."/>
            <person name="Steward C.A."/>
            <person name="Storey R."/>
            <person name="Swann R.M."/>
            <person name="Swarbreck D."/>
            <person name="Tabor P.E."/>
            <person name="Taudien S."/>
            <person name="Taylor T."/>
            <person name="Teague B."/>
            <person name="Thomas K."/>
            <person name="Thorpe A."/>
            <person name="Timms K."/>
            <person name="Tracey A."/>
            <person name="Trevanion S."/>
            <person name="Tromans A.C."/>
            <person name="d'Urso M."/>
            <person name="Verduzco D."/>
            <person name="Villasana D."/>
            <person name="Waldron L."/>
            <person name="Wall M."/>
            <person name="Wang Q."/>
            <person name="Warren J."/>
            <person name="Warry G.L."/>
            <person name="Wei X."/>
            <person name="West A."/>
            <person name="Whitehead S.L."/>
            <person name="Whiteley M.N."/>
            <person name="Wilkinson J.E."/>
            <person name="Willey D.L."/>
            <person name="Williams G."/>
            <person name="Williams L."/>
            <person name="Williamson A."/>
            <person name="Williamson H."/>
            <person name="Wilming L."/>
            <person name="Woodmansey R.L."/>
            <person name="Wray P.W."/>
            <person name="Yen J."/>
            <person name="Zhang J."/>
            <person name="Zhou J."/>
            <person name="Zoghbi H."/>
            <person name="Zorilla S."/>
            <person name="Buck D."/>
            <person name="Reinhardt R."/>
            <person name="Poustka A."/>
            <person name="Rosenthal A."/>
            <person name="Lehrach H."/>
            <person name="Meindl A."/>
            <person name="Minx P.J."/>
            <person name="Hillier L.W."/>
            <person name="Willard H.F."/>
            <person name="Wilson R.K."/>
            <person name="Waterston R.H."/>
            <person name="Rice C.M."/>
            <person name="Vaudin M."/>
            <person name="Coulson A."/>
            <person name="Nelson D.L."/>
            <person name="Weinstock G."/>
            <person name="Sulston J.E."/>
            <person name="Durbin R.M."/>
            <person name="Hubbard T."/>
            <person name="Gibbs R.A."/>
            <person name="Beck S."/>
            <person name="Rogers J."/>
            <person name="Bentley D.R."/>
        </authorList>
    </citation>
    <scope>NUCLEOTIDE SEQUENCE [LARGE SCALE GENOMIC DNA]</scope>
</reference>
<reference key="2">
    <citation type="submission" date="2005-09" db="EMBL/GenBank/DDBJ databases">
        <authorList>
            <person name="Mural R.J."/>
            <person name="Istrail S."/>
            <person name="Sutton G.G."/>
            <person name="Florea L."/>
            <person name="Halpern A.L."/>
            <person name="Mobarry C.M."/>
            <person name="Lippert R."/>
            <person name="Walenz B."/>
            <person name="Shatkay H."/>
            <person name="Dew I."/>
            <person name="Miller J.R."/>
            <person name="Flanigan M.J."/>
            <person name="Edwards N.J."/>
            <person name="Bolanos R."/>
            <person name="Fasulo D."/>
            <person name="Halldorsson B.V."/>
            <person name="Hannenhalli S."/>
            <person name="Turner R."/>
            <person name="Yooseph S."/>
            <person name="Lu F."/>
            <person name="Nusskern D.R."/>
            <person name="Shue B.C."/>
            <person name="Zheng X.H."/>
            <person name="Zhong F."/>
            <person name="Delcher A.L."/>
            <person name="Huson D.H."/>
            <person name="Kravitz S.A."/>
            <person name="Mouchard L."/>
            <person name="Reinert K."/>
            <person name="Remington K.A."/>
            <person name="Clark A.G."/>
            <person name="Waterman M.S."/>
            <person name="Eichler E.E."/>
            <person name="Adams M.D."/>
            <person name="Hunkapiller M.W."/>
            <person name="Myers E.W."/>
            <person name="Venter J.C."/>
        </authorList>
    </citation>
    <scope>NUCLEOTIDE SEQUENCE [LARGE SCALE GENOMIC DNA]</scope>
</reference>
<reference key="3">
    <citation type="journal article" date="2004" name="Genome Res.">
        <title>The status, quality, and expansion of the NIH full-length cDNA project: the Mammalian Gene Collection (MGC).</title>
        <authorList>
            <consortium name="The MGC Project Team"/>
        </authorList>
    </citation>
    <scope>NUCLEOTIDE SEQUENCE [LARGE SCALE MRNA]</scope>
    <source>
        <tissue>Brain</tissue>
        <tissue>Lung</tissue>
        <tissue>Testis</tissue>
    </source>
</reference>
<reference key="4">
    <citation type="journal article" date="2003" name="Proc. Natl. Acad. Sci. U.S.A.">
        <title>Immunomic analysis of human sarcoma.</title>
        <authorList>
            <person name="Lee S.-Y."/>
            <person name="Obata Y."/>
            <person name="Yoshida M."/>
            <person name="Stockert E."/>
            <person name="Williamson B."/>
            <person name="Jungbluth A.A."/>
            <person name="Chen Y.-T."/>
            <person name="Old L.J."/>
            <person name="Scanlan M.J."/>
        </authorList>
    </citation>
    <scope>NUCLEOTIDE SEQUENCE [MRNA] OF 1-195</scope>
    <scope>TISSUE SPECIFICITY</scope>
    <source>
        <tissue>Testis</tissue>
    </source>
</reference>
<reference key="5">
    <citation type="journal article" date="2017" name="Am. J. Hum. Genet.">
        <title>Mutations in PIH1D3 Cause X-Linked Primary Ciliary Dyskinesia with Outer and Inner Dynein Arm Defects.</title>
        <authorList>
            <person name="Paff T."/>
            <person name="Loges N.T."/>
            <person name="Aprea I."/>
            <person name="Wu K."/>
            <person name="Bakey Z."/>
            <person name="Haarman E.G."/>
            <person name="Daniels J.M."/>
            <person name="Sistermans E.A."/>
            <person name="Bogunovic N."/>
            <person name="Dougherty G.W."/>
            <person name="Hoeben I.M."/>
            <person name="Grosse-Onnebrink J."/>
            <person name="Matter A."/>
            <person name="Olbrich H."/>
            <person name="Werner C."/>
            <person name="Pals G."/>
            <person name="Schmidts M."/>
            <person name="Omran H."/>
            <person name="Micha D."/>
        </authorList>
    </citation>
    <scope>INVOLVEMENT IN CILD36</scope>
    <scope>VARIANT CILD36 119-GLN--PHE-214 DEL</scope>
    <scope>CHARACTERIZATION OF VARIANT CILD36 119-GLN--PHE-214 DEL</scope>
    <scope>FUNCTION</scope>
    <scope>INTERACTION WITH DNAAF2 AND DNAAF4</scope>
</reference>
<reference key="6">
    <citation type="journal article" date="2017" name="Nat. Commun.">
        <title>X-linked primary ciliary dyskinesia due to mutations in the cytoplasmic axonemal dynein assembly factor PIH1D3.</title>
        <authorList>
            <consortium name="UK10K Rare Group"/>
            <person name="Olcese C."/>
            <person name="Patel M.P."/>
            <person name="Shoemark A."/>
            <person name="Kiviluoto S."/>
            <person name="Legendre M."/>
            <person name="Williams H.J."/>
            <person name="Vaughan C.K."/>
            <person name="Hayward J."/>
            <person name="Goldenberg A."/>
            <person name="Emes R.D."/>
            <person name="Munye M.M."/>
            <person name="Dyer L."/>
            <person name="Cahill T."/>
            <person name="Bevillard J."/>
            <person name="Gehrig C."/>
            <person name="Guipponi M."/>
            <person name="Chantot S."/>
            <person name="Duquesnoy P."/>
            <person name="Thomas L."/>
            <person name="Jeanson L."/>
            <person name="Copin B."/>
            <person name="Tamalet A."/>
            <person name="Thauvin-Robinet C."/>
            <person name="Papon J.F."/>
            <person name="Garin A."/>
            <person name="Pin I."/>
            <person name="Vera G."/>
            <person name="Aurora P."/>
            <person name="Fassad M.R."/>
            <person name="Jenkins L."/>
            <person name="Boustred C."/>
            <person name="Cullup T."/>
            <person name="Dixon M."/>
            <person name="Onoufriadis A."/>
            <person name="Bush A."/>
            <person name="Chung E.M."/>
            <person name="Antonarakis S.E."/>
            <person name="Loebinger M.R."/>
            <person name="Wilson R."/>
            <person name="Armengot M."/>
            <person name="Escudier E."/>
            <person name="Hogg C."/>
            <person name="Amselem S."/>
            <person name="Sun Z."/>
            <person name="Bartoloni L."/>
            <person name="Blouin J.L."/>
            <person name="Mitchison H.M."/>
        </authorList>
    </citation>
    <scope>INVOLVEMENT IN CILD36</scope>
    <scope>VARIANTS CILD36 43-GLU--PHE-214 DEL; 89-TRP--PHE-214 DEL; TYR-133 AND 171-GLN--PHE-214 DEL</scope>
    <scope>CHARACTERIZATION OF VARIANTS CILD36 43-GLU--PHE-214 DEL; 89-TRP--PHE-214 DEL; TYR-133 AND 171-GLN--PHE-214</scope>
    <scope>SUBCELLULAR LOCATION</scope>
    <scope>TISSUE SPECIFICITY</scope>
    <scope>INTERACTION WITH DNAI2</scope>
    <scope>FUNCTION</scope>
</reference>